<name>TNR6_RAT</name>
<accession>Q63199</accession>
<comment type="function">
    <text evidence="2">Receptor for TNFSF6/FASLG. The adapter molecule FADD recruits caspase CASP8 to the activated receptor. The resulting death-inducing signaling complex (DISC) performs CASP8 proteolytic activation which initiates the subsequent cascade of caspases (aspartate-specific cysteine proteases) mediating apoptosis. FAS-mediated apoptosis may have a role in the induction of peripheral tolerance, in the antigen-stimulated suicide of mature T-cells, or both (By similarity).</text>
</comment>
<comment type="subunit">
    <text evidence="1 2 3 8">Component of the death-induced signaling complex (DISC) composed of cell surface receptor FAS/CD95, adapter protein FADD and the CASP8 protease; recruitment of CASP8 to the complex is required for processing of CASP8 into the p18 and p10 subunits (By similarity). Interacts directly (via DED domain) with NOL3 (via CARD domain); inhibits death-inducing signaling complex (DISC) assembly by inhibiting the increase in FAS-FADD binding induced by FAS activation (PubMed:15383280). Binds DAXX. Interacts with HIPK3. Part of a complex containing HIPK3 and FADD (By similarity). Binds RIPK1 and FAIM2. Interacts with BABAM2 and FEM1B. Interacts with CALM (By similarity). In the absence of stimulation, interacts with BIRC2, DDX3X and GSK3B. The interaction with BIRC2 and DDX3X is further enhanced upon receptor stimulation and accompanied by DDX3X and BIRC2 cleavage (By similarity).</text>
</comment>
<comment type="subcellular location">
    <subcellularLocation>
        <location evidence="4">Cell membrane</location>
        <topology evidence="4">Single-pass type I membrane protein</topology>
    </subcellularLocation>
    <subcellularLocation>
        <location evidence="2">Membrane raft</location>
    </subcellularLocation>
</comment>
<comment type="domain">
    <text>Contains a death domain involved in the binding of FADD, and maybe to other cytosolic adapter proteins.</text>
</comment>
<comment type="PTM">
    <text evidence="2">Palmitoylated. Palmitoylation by ZDHHC7 prevents the lysosomal degradation of FAS regulating its expression at the plasma membrane.</text>
</comment>
<proteinExistence type="evidence at protein level"/>
<reference key="1">
    <citation type="journal article" date="1994" name="Biochem. Biophys. Res. Commun.">
        <title>A variant mRNA species encoding a truncated form of Fas antigen in the rat liver.</title>
        <authorList>
            <person name="Kimura K."/>
            <person name="Yamamoto M."/>
            <person name="Wakatsuki T."/>
        </authorList>
    </citation>
    <scope>NUCLEOTIDE SEQUENCE [MRNA]</scope>
    <source>
        <strain>Sprague-Dawley</strain>
        <tissue>Liver</tissue>
    </source>
</reference>
<reference key="2">
    <citation type="journal article" date="2004" name="Mol. Cell">
        <title>Inhibition of both the extrinsic and intrinsic death pathways through nonhomotypic death-fold interactions.</title>
        <authorList>
            <person name="Nam Y.J."/>
            <person name="Mani K."/>
            <person name="Ashton A.W."/>
            <person name="Peng C.F."/>
            <person name="Krishnamurthy B."/>
            <person name="Hayakawa Y."/>
            <person name="Lee P."/>
            <person name="Korsmeyer S.J."/>
            <person name="Kitsis R.N."/>
        </authorList>
    </citation>
    <scope>INTERACTION WITH NOL3</scope>
</reference>
<feature type="signal peptide" evidence="5">
    <location>
        <begin position="1"/>
        <end position="21"/>
    </location>
</feature>
<feature type="chain" id="PRO_0000034569" description="Tumor necrosis factor receptor superfamily member 6">
    <location>
        <begin position="22"/>
        <end position="324"/>
    </location>
</feature>
<feature type="topological domain" description="Extracellular" evidence="5">
    <location>
        <begin position="22"/>
        <end position="171"/>
    </location>
</feature>
<feature type="transmembrane region" description="Helical" evidence="5">
    <location>
        <begin position="172"/>
        <end position="188"/>
    </location>
</feature>
<feature type="topological domain" description="Cytoplasmic" evidence="5">
    <location>
        <begin position="189"/>
        <end position="324"/>
    </location>
</feature>
<feature type="repeat" description="TNFR-Cys 1">
    <location>
        <begin position="43"/>
        <end position="79"/>
    </location>
</feature>
<feature type="repeat" description="TNFR-Cys 2">
    <location>
        <begin position="80"/>
        <end position="123"/>
    </location>
</feature>
<feature type="repeat" description="TNFR-Cys 3">
    <location>
        <begin position="124"/>
        <end position="163"/>
    </location>
</feature>
<feature type="domain" description="Death" evidence="6">
    <location>
        <begin position="219"/>
        <end position="303"/>
    </location>
</feature>
<feature type="region of interest" description="Interaction with HIPK3" evidence="1">
    <location>
        <begin position="201"/>
        <end position="306"/>
    </location>
</feature>
<feature type="region of interest" description="Interaction with CALM" evidence="2">
    <location>
        <begin position="219"/>
        <end position="243"/>
    </location>
</feature>
<feature type="modified residue" description="Phosphoserine" evidence="2">
    <location>
        <position position="214"/>
    </location>
</feature>
<feature type="glycosylation site" description="N-linked (GlcNAc...) asparagine" evidence="5">
    <location>
        <position position="43"/>
    </location>
</feature>
<feature type="glycosylation site" description="N-linked (GlcNAc...) asparagine" evidence="5">
    <location>
        <position position="114"/>
    </location>
</feature>
<feature type="glycosylation site" description="N-linked (GlcNAc...) asparagine" evidence="5">
    <location>
        <position position="132"/>
    </location>
</feature>
<feature type="disulfide bond" evidence="7">
    <location>
        <begin position="44"/>
        <end position="55"/>
    </location>
</feature>
<feature type="disulfide bond" evidence="7">
    <location>
        <begin position="56"/>
        <end position="69"/>
    </location>
</feature>
<feature type="disulfide bond" evidence="7">
    <location>
        <begin position="59"/>
        <end position="78"/>
    </location>
</feature>
<feature type="disulfide bond" evidence="7">
    <location>
        <begin position="81"/>
        <end position="97"/>
    </location>
</feature>
<feature type="disulfide bond" evidence="7">
    <location>
        <begin position="100"/>
        <end position="115"/>
    </location>
</feature>
<feature type="disulfide bond" evidence="7">
    <location>
        <begin position="103"/>
        <end position="123"/>
    </location>
</feature>
<feature type="disulfide bond" evidence="7">
    <location>
        <begin position="125"/>
        <end position="139"/>
    </location>
</feature>
<feature type="disulfide bond" evidence="7">
    <location>
        <begin position="142"/>
        <end position="154"/>
    </location>
</feature>
<feature type="disulfide bond" evidence="7">
    <location>
        <begin position="145"/>
        <end position="162"/>
    </location>
</feature>
<evidence type="ECO:0000250" key="1"/>
<evidence type="ECO:0000250" key="2">
    <source>
        <dbReference type="UniProtKB" id="P25445"/>
    </source>
</evidence>
<evidence type="ECO:0000250" key="3">
    <source>
        <dbReference type="UniProtKB" id="P25446"/>
    </source>
</evidence>
<evidence type="ECO:0000250" key="4">
    <source>
        <dbReference type="UniProtKB" id="P51867"/>
    </source>
</evidence>
<evidence type="ECO:0000255" key="5"/>
<evidence type="ECO:0000255" key="6">
    <source>
        <dbReference type="PROSITE-ProRule" id="PRU00064"/>
    </source>
</evidence>
<evidence type="ECO:0000255" key="7">
    <source>
        <dbReference type="PROSITE-ProRule" id="PRU00206"/>
    </source>
</evidence>
<evidence type="ECO:0000269" key="8">
    <source>
    </source>
</evidence>
<keyword id="KW-0053">Apoptosis</keyword>
<keyword id="KW-0112">Calmodulin-binding</keyword>
<keyword id="KW-1003">Cell membrane</keyword>
<keyword id="KW-1015">Disulfide bond</keyword>
<keyword id="KW-0325">Glycoprotein</keyword>
<keyword id="KW-0449">Lipoprotein</keyword>
<keyword id="KW-0472">Membrane</keyword>
<keyword id="KW-0564">Palmitate</keyword>
<keyword id="KW-0597">Phosphoprotein</keyword>
<keyword id="KW-0675">Receptor</keyword>
<keyword id="KW-1185">Reference proteome</keyword>
<keyword id="KW-0677">Repeat</keyword>
<keyword id="KW-0732">Signal</keyword>
<keyword id="KW-0812">Transmembrane</keyword>
<keyword id="KW-1133">Transmembrane helix</keyword>
<organism>
    <name type="scientific">Rattus norvegicus</name>
    <name type="common">Rat</name>
    <dbReference type="NCBI Taxonomy" id="10116"/>
    <lineage>
        <taxon>Eukaryota</taxon>
        <taxon>Metazoa</taxon>
        <taxon>Chordata</taxon>
        <taxon>Craniata</taxon>
        <taxon>Vertebrata</taxon>
        <taxon>Euteleostomi</taxon>
        <taxon>Mammalia</taxon>
        <taxon>Eutheria</taxon>
        <taxon>Euarchontoglires</taxon>
        <taxon>Glires</taxon>
        <taxon>Rodentia</taxon>
        <taxon>Myomorpha</taxon>
        <taxon>Muroidea</taxon>
        <taxon>Muridae</taxon>
        <taxon>Murinae</taxon>
        <taxon>Rattus</taxon>
    </lineage>
</organism>
<protein>
    <recommendedName>
        <fullName>Tumor necrosis factor receptor superfamily member 6</fullName>
    </recommendedName>
    <alternativeName>
        <fullName>Apo-1 antigen</fullName>
    </alternativeName>
    <alternativeName>
        <fullName>Apoptosis-mediating surface antigen FAS</fullName>
    </alternativeName>
    <alternativeName>
        <fullName>FASLG receptor</fullName>
    </alternativeName>
    <cdAntigenName>CD95</cdAntigenName>
</protein>
<dbReference type="EMBL" id="D26112">
    <property type="protein sequence ID" value="BAA05108.1"/>
    <property type="molecule type" value="mRNA"/>
</dbReference>
<dbReference type="PIR" id="JC2395">
    <property type="entry name" value="JC2395"/>
</dbReference>
<dbReference type="RefSeq" id="NP_631933.2">
    <property type="nucleotide sequence ID" value="NM_139194.2"/>
</dbReference>
<dbReference type="SMR" id="Q63199"/>
<dbReference type="FunCoup" id="Q63199">
    <property type="interactions" value="1241"/>
</dbReference>
<dbReference type="IntAct" id="Q63199">
    <property type="interactions" value="1"/>
</dbReference>
<dbReference type="STRING" id="10116.ENSRNOP00000025928"/>
<dbReference type="BindingDB" id="Q63199"/>
<dbReference type="ChEMBL" id="CHEMBL2417350"/>
<dbReference type="GlyCosmos" id="Q63199">
    <property type="glycosylation" value="3 sites, No reported glycans"/>
</dbReference>
<dbReference type="GlyGen" id="Q63199">
    <property type="glycosylation" value="3 sites"/>
</dbReference>
<dbReference type="PhosphoSitePlus" id="Q63199"/>
<dbReference type="PaxDb" id="10116-ENSRNOP00000025928"/>
<dbReference type="GeneID" id="246097"/>
<dbReference type="KEGG" id="rno:246097"/>
<dbReference type="UCSC" id="RGD:619831">
    <property type="organism name" value="rat"/>
</dbReference>
<dbReference type="AGR" id="RGD:619831"/>
<dbReference type="CTD" id="355"/>
<dbReference type="RGD" id="619831">
    <property type="gene designation" value="Fas"/>
</dbReference>
<dbReference type="eggNOG" id="ENOG502S0SV">
    <property type="taxonomic scope" value="Eukaryota"/>
</dbReference>
<dbReference type="InParanoid" id="Q63199"/>
<dbReference type="OrthoDB" id="69394at9989"/>
<dbReference type="PhylomeDB" id="Q63199"/>
<dbReference type="Reactome" id="R-RNO-3371378">
    <property type="pathway name" value="Regulation by c-FLIP"/>
</dbReference>
<dbReference type="Reactome" id="R-RNO-5218900">
    <property type="pathway name" value="CASP8 activity is inhibited"/>
</dbReference>
<dbReference type="Reactome" id="R-RNO-69416">
    <property type="pathway name" value="Dimerization of procaspase-8"/>
</dbReference>
<dbReference type="Reactome" id="R-RNO-75157">
    <property type="pathway name" value="FasL/ CD95L signaling"/>
</dbReference>
<dbReference type="PRO" id="PR:Q63199"/>
<dbReference type="Proteomes" id="UP000002494">
    <property type="component" value="Unplaced"/>
</dbReference>
<dbReference type="GO" id="GO:0097440">
    <property type="term" value="C:apical dendrite"/>
    <property type="evidence" value="ECO:0000314"/>
    <property type="project" value="RGD"/>
</dbReference>
<dbReference type="GO" id="GO:0016324">
    <property type="term" value="C:apical plasma membrane"/>
    <property type="evidence" value="ECO:0000314"/>
    <property type="project" value="RGD"/>
</dbReference>
<dbReference type="GO" id="GO:0031265">
    <property type="term" value="C:CD95 death-inducing signaling complex"/>
    <property type="evidence" value="ECO:0000314"/>
    <property type="project" value="RGD"/>
</dbReference>
<dbReference type="GO" id="GO:0009986">
    <property type="term" value="C:cell surface"/>
    <property type="evidence" value="ECO:0000314"/>
    <property type="project" value="RGD"/>
</dbReference>
<dbReference type="GO" id="GO:0031264">
    <property type="term" value="C:death-inducing signaling complex"/>
    <property type="evidence" value="ECO:0000314"/>
    <property type="project" value="RGD"/>
</dbReference>
<dbReference type="GO" id="GO:0009897">
    <property type="term" value="C:external side of plasma membrane"/>
    <property type="evidence" value="ECO:0000314"/>
    <property type="project" value="RGD"/>
</dbReference>
<dbReference type="GO" id="GO:0005576">
    <property type="term" value="C:extracellular region"/>
    <property type="evidence" value="ECO:0000266"/>
    <property type="project" value="RGD"/>
</dbReference>
<dbReference type="GO" id="GO:0005615">
    <property type="term" value="C:extracellular space"/>
    <property type="evidence" value="ECO:0000314"/>
    <property type="project" value="RGD"/>
</dbReference>
<dbReference type="GO" id="GO:0045121">
    <property type="term" value="C:membrane raft"/>
    <property type="evidence" value="ECO:0000266"/>
    <property type="project" value="RGD"/>
</dbReference>
<dbReference type="GO" id="GO:0043025">
    <property type="term" value="C:neuronal cell body"/>
    <property type="evidence" value="ECO:0000314"/>
    <property type="project" value="RGD"/>
</dbReference>
<dbReference type="GO" id="GO:0048471">
    <property type="term" value="C:perinuclear region of cytoplasm"/>
    <property type="evidence" value="ECO:0000314"/>
    <property type="project" value="RGD"/>
</dbReference>
<dbReference type="GO" id="GO:0005886">
    <property type="term" value="C:plasma membrane"/>
    <property type="evidence" value="ECO:0000266"/>
    <property type="project" value="RGD"/>
</dbReference>
<dbReference type="GO" id="GO:0042383">
    <property type="term" value="C:sarcolemma"/>
    <property type="evidence" value="ECO:0000314"/>
    <property type="project" value="RGD"/>
</dbReference>
<dbReference type="GO" id="GO:0030141">
    <property type="term" value="C:secretory granule"/>
    <property type="evidence" value="ECO:0000314"/>
    <property type="project" value="RGD"/>
</dbReference>
<dbReference type="GO" id="GO:0005516">
    <property type="term" value="F:calmodulin binding"/>
    <property type="evidence" value="ECO:0000250"/>
    <property type="project" value="UniProtKB"/>
</dbReference>
<dbReference type="GO" id="GO:0042802">
    <property type="term" value="F:identical protein binding"/>
    <property type="evidence" value="ECO:0000266"/>
    <property type="project" value="RGD"/>
</dbReference>
<dbReference type="GO" id="GO:0019900">
    <property type="term" value="F:kinase binding"/>
    <property type="evidence" value="ECO:0000266"/>
    <property type="project" value="RGD"/>
</dbReference>
<dbReference type="GO" id="GO:0002020">
    <property type="term" value="F:protease binding"/>
    <property type="evidence" value="ECO:0000353"/>
    <property type="project" value="RGD"/>
</dbReference>
<dbReference type="GO" id="GO:0044877">
    <property type="term" value="F:protein-containing complex binding"/>
    <property type="evidence" value="ECO:0000353"/>
    <property type="project" value="RGD"/>
</dbReference>
<dbReference type="GO" id="GO:0004888">
    <property type="term" value="F:transmembrane signaling receptor activity"/>
    <property type="evidence" value="ECO:0000303"/>
    <property type="project" value="RGD"/>
</dbReference>
<dbReference type="GO" id="GO:0005031">
    <property type="term" value="F:tumor necrosis factor receptor activity"/>
    <property type="evidence" value="ECO:0000315"/>
    <property type="project" value="RGD"/>
</dbReference>
<dbReference type="GO" id="GO:0006924">
    <property type="term" value="P:activation-induced cell death of T cells"/>
    <property type="evidence" value="ECO:0000266"/>
    <property type="project" value="RGD"/>
</dbReference>
<dbReference type="GO" id="GO:0006915">
    <property type="term" value="P:apoptotic process"/>
    <property type="evidence" value="ECO:0000266"/>
    <property type="project" value="RGD"/>
</dbReference>
<dbReference type="GO" id="GO:0097190">
    <property type="term" value="P:apoptotic signaling pathway"/>
    <property type="evidence" value="ECO:0000315"/>
    <property type="project" value="RGD"/>
</dbReference>
<dbReference type="GO" id="GO:0019724">
    <property type="term" value="P:B cell mediated immunity"/>
    <property type="evidence" value="ECO:0000266"/>
    <property type="project" value="RGD"/>
</dbReference>
<dbReference type="GO" id="GO:0034198">
    <property type="term" value="P:cellular response to amino acid starvation"/>
    <property type="evidence" value="ECO:0000266"/>
    <property type="project" value="RGD"/>
</dbReference>
<dbReference type="GO" id="GO:0071279">
    <property type="term" value="P:cellular response to cobalt ion"/>
    <property type="evidence" value="ECO:0000270"/>
    <property type="project" value="RGD"/>
</dbReference>
<dbReference type="GO" id="GO:0071345">
    <property type="term" value="P:cellular response to cytokine stimulus"/>
    <property type="evidence" value="ECO:0000270"/>
    <property type="project" value="RGD"/>
</dbReference>
<dbReference type="GO" id="GO:0071391">
    <property type="term" value="P:cellular response to estrogen stimulus"/>
    <property type="evidence" value="ECO:0000270"/>
    <property type="project" value="RGD"/>
</dbReference>
<dbReference type="GO" id="GO:0070301">
    <property type="term" value="P:cellular response to hydrogen peroxide"/>
    <property type="evidence" value="ECO:0000270"/>
    <property type="project" value="RGD"/>
</dbReference>
<dbReference type="GO" id="GO:0071464">
    <property type="term" value="P:cellular response to hydrostatic pressure"/>
    <property type="evidence" value="ECO:0000270"/>
    <property type="project" value="RGD"/>
</dbReference>
<dbReference type="GO" id="GO:0071455">
    <property type="term" value="P:cellular response to hyperoxia"/>
    <property type="evidence" value="ECO:0000266"/>
    <property type="project" value="RGD"/>
</dbReference>
<dbReference type="GO" id="GO:0071456">
    <property type="term" value="P:cellular response to hypoxia"/>
    <property type="evidence" value="ECO:0000270"/>
    <property type="project" value="RGD"/>
</dbReference>
<dbReference type="GO" id="GO:0071347">
    <property type="term" value="P:cellular response to interleukin-1"/>
    <property type="evidence" value="ECO:0000270"/>
    <property type="project" value="RGD"/>
</dbReference>
<dbReference type="GO" id="GO:0071285">
    <property type="term" value="P:cellular response to lithium ion"/>
    <property type="evidence" value="ECO:0000266"/>
    <property type="project" value="RGD"/>
</dbReference>
<dbReference type="GO" id="GO:0071260">
    <property type="term" value="P:cellular response to mechanical stimulus"/>
    <property type="evidence" value="ECO:0000266"/>
    <property type="project" value="RGD"/>
</dbReference>
<dbReference type="GO" id="GO:0071234">
    <property type="term" value="P:cellular response to phenylalanine"/>
    <property type="evidence" value="ECO:0000270"/>
    <property type="project" value="RGD"/>
</dbReference>
<dbReference type="GO" id="GO:0071356">
    <property type="term" value="P:cellular response to tumor necrosis factor"/>
    <property type="evidence" value="ECO:0000270"/>
    <property type="project" value="RGD"/>
</dbReference>
<dbReference type="GO" id="GO:0071346">
    <property type="term" value="P:cellular response to type II interferon"/>
    <property type="evidence" value="ECO:0000270"/>
    <property type="project" value="RGD"/>
</dbReference>
<dbReference type="GO" id="GO:0043009">
    <property type="term" value="P:chordate embryonic development"/>
    <property type="evidence" value="ECO:0000270"/>
    <property type="project" value="RGD"/>
</dbReference>
<dbReference type="GO" id="GO:0007623">
    <property type="term" value="P:circadian rhythm"/>
    <property type="evidence" value="ECO:0000266"/>
    <property type="project" value="RGD"/>
</dbReference>
<dbReference type="GO" id="GO:0031104">
    <property type="term" value="P:dendrite regeneration"/>
    <property type="evidence" value="ECO:0000315"/>
    <property type="project" value="RGD"/>
</dbReference>
<dbReference type="GO" id="GO:0097191">
    <property type="term" value="P:extrinsic apoptotic signaling pathway"/>
    <property type="evidence" value="ECO:0000315"/>
    <property type="project" value="RGD"/>
</dbReference>
<dbReference type="GO" id="GO:0097192">
    <property type="term" value="P:extrinsic apoptotic signaling pathway in absence of ligand"/>
    <property type="evidence" value="ECO:0000266"/>
    <property type="project" value="RGD"/>
</dbReference>
<dbReference type="GO" id="GO:0008625">
    <property type="term" value="P:extrinsic apoptotic signaling pathway via death domain receptors"/>
    <property type="evidence" value="ECO:0000266"/>
    <property type="project" value="RGD"/>
</dbReference>
<dbReference type="GO" id="GO:0036337">
    <property type="term" value="P:Fas signaling pathway"/>
    <property type="evidence" value="ECO:0000266"/>
    <property type="project" value="RGD"/>
</dbReference>
<dbReference type="GO" id="GO:0010467">
    <property type="term" value="P:gene expression"/>
    <property type="evidence" value="ECO:0000266"/>
    <property type="project" value="RGD"/>
</dbReference>
<dbReference type="GO" id="GO:0097284">
    <property type="term" value="P:hepatocyte apoptotic process"/>
    <property type="evidence" value="ECO:0000266"/>
    <property type="project" value="RGD"/>
</dbReference>
<dbReference type="GO" id="GO:0006925">
    <property type="term" value="P:inflammatory cell apoptotic process"/>
    <property type="evidence" value="ECO:0000266"/>
    <property type="project" value="RGD"/>
</dbReference>
<dbReference type="GO" id="GO:0097421">
    <property type="term" value="P:liver regeneration"/>
    <property type="evidence" value="ECO:0000270"/>
    <property type="project" value="RGD"/>
</dbReference>
<dbReference type="GO" id="GO:0070227">
    <property type="term" value="P:lymphocyte apoptotic process"/>
    <property type="evidence" value="ECO:0000266"/>
    <property type="project" value="RGD"/>
</dbReference>
<dbReference type="GO" id="GO:0060135">
    <property type="term" value="P:maternal process involved in female pregnancy"/>
    <property type="evidence" value="ECO:0000270"/>
    <property type="project" value="RGD"/>
</dbReference>
<dbReference type="GO" id="GO:0097049">
    <property type="term" value="P:motor neuron apoptotic process"/>
    <property type="evidence" value="ECO:0000266"/>
    <property type="project" value="RGD"/>
</dbReference>
<dbReference type="GO" id="GO:0097527">
    <property type="term" value="P:necroptotic signaling pathway"/>
    <property type="evidence" value="ECO:0000266"/>
    <property type="project" value="RGD"/>
</dbReference>
<dbReference type="GO" id="GO:0043066">
    <property type="term" value="P:negative regulation of apoptotic process"/>
    <property type="evidence" value="ECO:0000266"/>
    <property type="project" value="RGD"/>
</dbReference>
<dbReference type="GO" id="GO:0050869">
    <property type="term" value="P:negative regulation of B cell activation"/>
    <property type="evidence" value="ECO:0000266"/>
    <property type="project" value="RGD"/>
</dbReference>
<dbReference type="GO" id="GO:1900148">
    <property type="term" value="P:negative regulation of Schwann cell migration"/>
    <property type="evidence" value="ECO:0000315"/>
    <property type="project" value="RGD"/>
</dbReference>
<dbReference type="GO" id="GO:0010626">
    <property type="term" value="P:negative regulation of Schwann cell proliferation"/>
    <property type="evidence" value="ECO:0000315"/>
    <property type="project" value="RGD"/>
</dbReference>
<dbReference type="GO" id="GO:0045060">
    <property type="term" value="P:negative thymic T cell selection"/>
    <property type="evidence" value="ECO:0000266"/>
    <property type="project" value="RGD"/>
</dbReference>
<dbReference type="GO" id="GO:0051402">
    <property type="term" value="P:neuron apoptotic process"/>
    <property type="evidence" value="ECO:0000266"/>
    <property type="project" value="RGD"/>
</dbReference>
<dbReference type="GO" id="GO:0001552">
    <property type="term" value="P:ovarian follicle atresia"/>
    <property type="evidence" value="ECO:0000270"/>
    <property type="project" value="RGD"/>
</dbReference>
<dbReference type="GO" id="GO:0042698">
    <property type="term" value="P:ovulation cycle"/>
    <property type="evidence" value="ECO:0000270"/>
    <property type="project" value="RGD"/>
</dbReference>
<dbReference type="GO" id="GO:0043065">
    <property type="term" value="P:positive regulation of apoptotic process"/>
    <property type="evidence" value="ECO:0000315"/>
    <property type="project" value="RGD"/>
</dbReference>
<dbReference type="GO" id="GO:2001235">
    <property type="term" value="P:positive regulation of apoptotic signaling pathway"/>
    <property type="evidence" value="ECO:0000266"/>
    <property type="project" value="RGD"/>
</dbReference>
<dbReference type="GO" id="GO:0043525">
    <property type="term" value="P:positive regulation of neuron apoptotic process"/>
    <property type="evidence" value="ECO:0000315"/>
    <property type="project" value="RGD"/>
</dbReference>
<dbReference type="GO" id="GO:0031334">
    <property type="term" value="P:positive regulation of protein-containing complex assembly"/>
    <property type="evidence" value="ECO:0000266"/>
    <property type="project" value="RGD"/>
</dbReference>
<dbReference type="GO" id="GO:1903428">
    <property type="term" value="P:positive regulation of reactive oxygen species biosynthetic process"/>
    <property type="evidence" value="ECO:0000266"/>
    <property type="project" value="RGD"/>
</dbReference>
<dbReference type="GO" id="GO:0042981">
    <property type="term" value="P:regulation of apoptotic process"/>
    <property type="evidence" value="ECO:0000315"/>
    <property type="project" value="RGD"/>
</dbReference>
<dbReference type="GO" id="GO:0045577">
    <property type="term" value="P:regulation of B cell differentiation"/>
    <property type="evidence" value="ECO:0000266"/>
    <property type="project" value="RGD"/>
</dbReference>
<dbReference type="GO" id="GO:0042127">
    <property type="term" value="P:regulation of cell population proliferation"/>
    <property type="evidence" value="ECO:0000315"/>
    <property type="project" value="RGD"/>
</dbReference>
<dbReference type="GO" id="GO:1901532">
    <property type="term" value="P:regulation of hematopoietic progenitor cell differentiation"/>
    <property type="evidence" value="ECO:0000266"/>
    <property type="project" value="RGD"/>
</dbReference>
<dbReference type="GO" id="GO:0045637">
    <property type="term" value="P:regulation of myeloid cell differentiation"/>
    <property type="evidence" value="ECO:0000266"/>
    <property type="project" value="RGD"/>
</dbReference>
<dbReference type="GO" id="GO:0032872">
    <property type="term" value="P:regulation of stress-activated MAPK cascade"/>
    <property type="evidence" value="ECO:0000266"/>
    <property type="project" value="RGD"/>
</dbReference>
<dbReference type="GO" id="GO:0045580">
    <property type="term" value="P:regulation of T cell differentiation"/>
    <property type="evidence" value="ECO:0000266"/>
    <property type="project" value="RGD"/>
</dbReference>
<dbReference type="GO" id="GO:0046898">
    <property type="term" value="P:response to cycloheximide"/>
    <property type="evidence" value="ECO:0000270"/>
    <property type="project" value="RGD"/>
</dbReference>
<dbReference type="GO" id="GO:0034097">
    <property type="term" value="P:response to cytokine"/>
    <property type="evidence" value="ECO:0000270"/>
    <property type="project" value="RGD"/>
</dbReference>
<dbReference type="GO" id="GO:0043627">
    <property type="term" value="P:response to estrogen"/>
    <property type="evidence" value="ECO:0000270"/>
    <property type="project" value="RGD"/>
</dbReference>
<dbReference type="GO" id="GO:0045471">
    <property type="term" value="P:response to ethanol"/>
    <property type="evidence" value="ECO:0000270"/>
    <property type="project" value="RGD"/>
</dbReference>
<dbReference type="GO" id="GO:1902617">
    <property type="term" value="P:response to fluoride"/>
    <property type="evidence" value="ECO:0000270"/>
    <property type="project" value="RGD"/>
</dbReference>
<dbReference type="GO" id="GO:0051384">
    <property type="term" value="P:response to glucocorticoid"/>
    <property type="evidence" value="ECO:0000266"/>
    <property type="project" value="RGD"/>
</dbReference>
<dbReference type="GO" id="GO:0070848">
    <property type="term" value="P:response to growth factor"/>
    <property type="evidence" value="ECO:0000270"/>
    <property type="project" value="RGD"/>
</dbReference>
<dbReference type="GO" id="GO:0001666">
    <property type="term" value="P:response to hypoxia"/>
    <property type="evidence" value="ECO:0000270"/>
    <property type="project" value="RGD"/>
</dbReference>
<dbReference type="GO" id="GO:0002931">
    <property type="term" value="P:response to ischemia"/>
    <property type="evidence" value="ECO:0000270"/>
    <property type="project" value="RGD"/>
</dbReference>
<dbReference type="GO" id="GO:0032496">
    <property type="term" value="P:response to lipopolysaccharide"/>
    <property type="evidence" value="ECO:0000270"/>
    <property type="project" value="RGD"/>
</dbReference>
<dbReference type="GO" id="GO:0031667">
    <property type="term" value="P:response to nutrient levels"/>
    <property type="evidence" value="ECO:0000270"/>
    <property type="project" value="RGD"/>
</dbReference>
<dbReference type="GO" id="GO:0043434">
    <property type="term" value="P:response to peptide hormone"/>
    <property type="evidence" value="ECO:0000270"/>
    <property type="project" value="RGD"/>
</dbReference>
<dbReference type="GO" id="GO:0009636">
    <property type="term" value="P:response to toxic substance"/>
    <property type="evidence" value="ECO:0000270"/>
    <property type="project" value="RGD"/>
</dbReference>
<dbReference type="GO" id="GO:0009410">
    <property type="term" value="P:response to xenobiotic stimulus"/>
    <property type="evidence" value="ECO:0000270"/>
    <property type="project" value="RGD"/>
</dbReference>
<dbReference type="GO" id="GO:0007283">
    <property type="term" value="P:spermatogenesis"/>
    <property type="evidence" value="ECO:0000270"/>
    <property type="project" value="RGD"/>
</dbReference>
<dbReference type="GO" id="GO:0048536">
    <property type="term" value="P:spleen development"/>
    <property type="evidence" value="ECO:0000266"/>
    <property type="project" value="RGD"/>
</dbReference>
<dbReference type="GO" id="GO:0043029">
    <property type="term" value="P:T cell homeostasis"/>
    <property type="evidence" value="ECO:0000266"/>
    <property type="project" value="RGD"/>
</dbReference>
<dbReference type="GO" id="GO:0021537">
    <property type="term" value="P:telencephalon development"/>
    <property type="evidence" value="ECO:0000270"/>
    <property type="project" value="RGD"/>
</dbReference>
<dbReference type="CDD" id="cd08316">
    <property type="entry name" value="Death_FAS_TNFRSF6"/>
    <property type="match status" value="1"/>
</dbReference>
<dbReference type="CDD" id="cd10579">
    <property type="entry name" value="TNFRSF6"/>
    <property type="match status" value="1"/>
</dbReference>
<dbReference type="FunFam" id="2.10.50.10:FF:000021">
    <property type="entry name" value="Tumor necrosis factor receptor superfamily member 6"/>
    <property type="match status" value="1"/>
</dbReference>
<dbReference type="Gene3D" id="1.10.533.10">
    <property type="entry name" value="Death Domain, Fas"/>
    <property type="match status" value="1"/>
</dbReference>
<dbReference type="Gene3D" id="2.10.50.10">
    <property type="entry name" value="Tumor Necrosis Factor Receptor, subunit A, domain 2"/>
    <property type="match status" value="2"/>
</dbReference>
<dbReference type="InterPro" id="IPR011029">
    <property type="entry name" value="DEATH-like_dom_sf"/>
</dbReference>
<dbReference type="InterPro" id="IPR000488">
    <property type="entry name" value="Death_dom"/>
</dbReference>
<dbReference type="InterPro" id="IPR008063">
    <property type="entry name" value="Fas_rcpt"/>
</dbReference>
<dbReference type="InterPro" id="IPR001368">
    <property type="entry name" value="TNFR/NGFR_Cys_rich_reg"/>
</dbReference>
<dbReference type="InterPro" id="IPR033998">
    <property type="entry name" value="TNFRSF6_death"/>
</dbReference>
<dbReference type="InterPro" id="IPR033999">
    <property type="entry name" value="TNFRSF6_N"/>
</dbReference>
<dbReference type="PANTHER" id="PTHR46874">
    <property type="entry name" value="TUMOR NECROSIS FACTOR RECEPTOR SUPERFAMILY MEMBER 6"/>
    <property type="match status" value="1"/>
</dbReference>
<dbReference type="PANTHER" id="PTHR46874:SF1">
    <property type="entry name" value="TUMOR NECROSIS FACTOR RECEPTOR SUPERFAMILY MEMBER 6"/>
    <property type="match status" value="1"/>
</dbReference>
<dbReference type="Pfam" id="PF00531">
    <property type="entry name" value="Death"/>
    <property type="match status" value="1"/>
</dbReference>
<dbReference type="Pfam" id="PF00020">
    <property type="entry name" value="TNFR_c6"/>
    <property type="match status" value="1"/>
</dbReference>
<dbReference type="PRINTS" id="PR01680">
    <property type="entry name" value="TNFACTORR6"/>
</dbReference>
<dbReference type="SMART" id="SM00005">
    <property type="entry name" value="DEATH"/>
    <property type="match status" value="1"/>
</dbReference>
<dbReference type="SMART" id="SM00208">
    <property type="entry name" value="TNFR"/>
    <property type="match status" value="3"/>
</dbReference>
<dbReference type="SUPFAM" id="SSF47986">
    <property type="entry name" value="DEATH domain"/>
    <property type="match status" value="1"/>
</dbReference>
<dbReference type="SUPFAM" id="SSF57586">
    <property type="entry name" value="TNF receptor-like"/>
    <property type="match status" value="2"/>
</dbReference>
<dbReference type="PROSITE" id="PS50017">
    <property type="entry name" value="DEATH_DOMAIN"/>
    <property type="match status" value="1"/>
</dbReference>
<dbReference type="PROSITE" id="PS00652">
    <property type="entry name" value="TNFR_NGFR_1"/>
    <property type="match status" value="2"/>
</dbReference>
<dbReference type="PROSITE" id="PS50050">
    <property type="entry name" value="TNFR_NGFR_2"/>
    <property type="match status" value="2"/>
</dbReference>
<sequence length="324" mass="36835">MLWIMAVLPLVLAGPELNVRMQGTDSIFEGLELKRSVRETDNNCSEGLYQVGPFCCQPCQPGERKVKDCTTSGGAPTCHPCTEGEEYTDRKHYSDKCRRCAFCDEGHGLEVETNCTRTQNTKCRCKENFYCNASLCDHCYHCTSCGLEDILEPCTRTSNTKCKKQSSNYKLLWLLILPGLAILFVFIYKRYRKRQPGDPESGIPSPESVPMNVSDVNLNKYIWRTAEKMKICDAKKFARQHKIPESKIDEIEHNSPQDAAEQKIQLLQCWYQSHGKTGACQALIQGLRKANRCDIAEEIQAMVWEDHENSISNSRNENEGQSLE</sequence>
<gene>
    <name type="primary">Fas</name>
    <name type="synonym">Apt1</name>
    <name type="synonym">Tnfrsf6</name>
</gene>